<protein>
    <recommendedName>
        <fullName>Uncharacterized protein R257</fullName>
    </recommendedName>
</protein>
<dbReference type="EMBL" id="AY653733">
    <property type="protein sequence ID" value="AAV50529.1"/>
    <property type="molecule type" value="Genomic_DNA"/>
</dbReference>
<dbReference type="SMR" id="Q5UPT7"/>
<dbReference type="KEGG" id="vg:9924866"/>
<dbReference type="OrthoDB" id="18854at10239"/>
<dbReference type="Proteomes" id="UP000001134">
    <property type="component" value="Genome"/>
</dbReference>
<feature type="chain" id="PRO_0000244012" description="Uncharacterized protein R257">
    <location>
        <begin position="1"/>
        <end position="335"/>
    </location>
</feature>
<keyword id="KW-1185">Reference proteome</keyword>
<organism>
    <name type="scientific">Acanthamoeba polyphaga mimivirus</name>
    <name type="common">APMV</name>
    <dbReference type="NCBI Taxonomy" id="212035"/>
    <lineage>
        <taxon>Viruses</taxon>
        <taxon>Varidnaviria</taxon>
        <taxon>Bamfordvirae</taxon>
        <taxon>Nucleocytoviricota</taxon>
        <taxon>Megaviricetes</taxon>
        <taxon>Imitervirales</taxon>
        <taxon>Mimiviridae</taxon>
        <taxon>Megamimivirinae</taxon>
        <taxon>Mimivirus</taxon>
        <taxon>Mimivirus bradfordmassiliense</taxon>
    </lineage>
</organism>
<sequence length="335" mass="38659">MMGINSVYSKPISEIEFASAMNSVKNRFGVDENEWYIYLESEDYIYDQRLIEKGMEPKHSDTHRKFPKIIKNGQIDIDNIGDDFMLPDPIALIKEWQSSPNSWEKKVVSVMKTLGDFKNVIKILDIGSSNDCINPVSSGLTRPLEGREKIVSDIVQNLISRMSTIDTTDKNKSRQYQQEINTIVATYNSFHPVWSFVKLSKLNYWSKEIEVPFIRKGNRAINDINVNLRPSEDLKVSPTDKQFSQGYIPYLINKMVLGDIPNEIAAIVFNNTIVIDGLNLSEGQRLRAVLLSGNSRDSFDNRCIFKCKHFLENFFRENTIKEYNYTRYVKISIPK</sequence>
<reference key="1">
    <citation type="journal article" date="2004" name="Science">
        <title>The 1.2-megabase genome sequence of Mimivirus.</title>
        <authorList>
            <person name="Raoult D."/>
            <person name="Audic S."/>
            <person name="Robert C."/>
            <person name="Abergel C."/>
            <person name="Renesto P."/>
            <person name="Ogata H."/>
            <person name="La Scola B."/>
            <person name="Susan M."/>
            <person name="Claverie J.-M."/>
        </authorList>
    </citation>
    <scope>NUCLEOTIDE SEQUENCE [LARGE SCALE GENOMIC DNA]</scope>
    <source>
        <strain>Rowbotham-Bradford</strain>
    </source>
</reference>
<accession>Q5UPT7</accession>
<gene>
    <name type="ordered locus">MIMI_R257</name>
</gene>
<name>YR257_MIMIV</name>
<proteinExistence type="predicted"/>
<organismHost>
    <name type="scientific">Acanthamoeba polyphaga</name>
    <name type="common">Amoeba</name>
    <dbReference type="NCBI Taxonomy" id="5757"/>
</organismHost>